<keyword id="KW-0031">Aminopeptidase</keyword>
<keyword id="KW-0963">Cytoplasm</keyword>
<keyword id="KW-0378">Hydrolase</keyword>
<keyword id="KW-0479">Metal-binding</keyword>
<keyword id="KW-0482">Metalloprotease</keyword>
<keyword id="KW-0645">Protease</keyword>
<keyword id="KW-1185">Reference proteome</keyword>
<keyword id="KW-0862">Zinc</keyword>
<name>PEPT_STAA8</name>
<evidence type="ECO:0000255" key="1">
    <source>
        <dbReference type="HAMAP-Rule" id="MF_00550"/>
    </source>
</evidence>
<evidence type="ECO:0000256" key="2">
    <source>
        <dbReference type="SAM" id="MobiDB-lite"/>
    </source>
</evidence>
<gene>
    <name evidence="1" type="primary">pepT</name>
    <name type="ordered locus">SAOUHSC_00757</name>
</gene>
<dbReference type="EC" id="3.4.11.4" evidence="1"/>
<dbReference type="EMBL" id="CP000253">
    <property type="protein sequence ID" value="ABD29889.1"/>
    <property type="molecule type" value="Genomic_DNA"/>
</dbReference>
<dbReference type="RefSeq" id="WP_000795826.1">
    <property type="nucleotide sequence ID" value="NZ_LS483365.1"/>
</dbReference>
<dbReference type="RefSeq" id="YP_499316.1">
    <property type="nucleotide sequence ID" value="NC_007795.1"/>
</dbReference>
<dbReference type="SMR" id="Q2G064"/>
<dbReference type="STRING" id="93061.SAOUHSC_00757"/>
<dbReference type="MEROPS" id="M20.003"/>
<dbReference type="PaxDb" id="1280-SAXN108_0810"/>
<dbReference type="GeneID" id="3919518"/>
<dbReference type="KEGG" id="sao:SAOUHSC_00757"/>
<dbReference type="PATRIC" id="fig|93061.5.peg.683"/>
<dbReference type="eggNOG" id="COG2195">
    <property type="taxonomic scope" value="Bacteria"/>
</dbReference>
<dbReference type="HOGENOM" id="CLU_053676_0_0_9"/>
<dbReference type="OrthoDB" id="9804934at2"/>
<dbReference type="PRO" id="PR:Q2G064"/>
<dbReference type="Proteomes" id="UP000008816">
    <property type="component" value="Chromosome"/>
</dbReference>
<dbReference type="GO" id="GO:0005829">
    <property type="term" value="C:cytosol"/>
    <property type="evidence" value="ECO:0000318"/>
    <property type="project" value="GO_Central"/>
</dbReference>
<dbReference type="GO" id="GO:0008237">
    <property type="term" value="F:metallopeptidase activity"/>
    <property type="evidence" value="ECO:0007669"/>
    <property type="project" value="UniProtKB-KW"/>
</dbReference>
<dbReference type="GO" id="GO:0045148">
    <property type="term" value="F:tripeptide aminopeptidase activity"/>
    <property type="evidence" value="ECO:0000318"/>
    <property type="project" value="GO_Central"/>
</dbReference>
<dbReference type="GO" id="GO:0008270">
    <property type="term" value="F:zinc ion binding"/>
    <property type="evidence" value="ECO:0007669"/>
    <property type="project" value="UniProtKB-UniRule"/>
</dbReference>
<dbReference type="GO" id="GO:0043171">
    <property type="term" value="P:peptide catabolic process"/>
    <property type="evidence" value="ECO:0007669"/>
    <property type="project" value="UniProtKB-UniRule"/>
</dbReference>
<dbReference type="GO" id="GO:0006508">
    <property type="term" value="P:proteolysis"/>
    <property type="evidence" value="ECO:0007669"/>
    <property type="project" value="UniProtKB-UniRule"/>
</dbReference>
<dbReference type="CDD" id="cd03892">
    <property type="entry name" value="M20_peptT"/>
    <property type="match status" value="1"/>
</dbReference>
<dbReference type="FunFam" id="3.30.70.360:FF:000002">
    <property type="entry name" value="Peptidase T"/>
    <property type="match status" value="1"/>
</dbReference>
<dbReference type="Gene3D" id="3.30.70.360">
    <property type="match status" value="1"/>
</dbReference>
<dbReference type="Gene3D" id="3.40.630.10">
    <property type="entry name" value="Zn peptidases"/>
    <property type="match status" value="1"/>
</dbReference>
<dbReference type="HAMAP" id="MF_00550">
    <property type="entry name" value="Aminopeptidase_M20"/>
    <property type="match status" value="1"/>
</dbReference>
<dbReference type="InterPro" id="IPR001261">
    <property type="entry name" value="ArgE/DapE_CS"/>
</dbReference>
<dbReference type="InterPro" id="IPR036264">
    <property type="entry name" value="Bact_exopeptidase_dim_dom"/>
</dbReference>
<dbReference type="InterPro" id="IPR002933">
    <property type="entry name" value="Peptidase_M20"/>
</dbReference>
<dbReference type="InterPro" id="IPR011650">
    <property type="entry name" value="Peptidase_M20_dimer"/>
</dbReference>
<dbReference type="InterPro" id="IPR010161">
    <property type="entry name" value="Peptidase_M20B"/>
</dbReference>
<dbReference type="NCBIfam" id="TIGR01882">
    <property type="entry name" value="peptidase-T"/>
    <property type="match status" value="1"/>
</dbReference>
<dbReference type="NCBIfam" id="NF003976">
    <property type="entry name" value="PRK05469.1"/>
    <property type="match status" value="1"/>
</dbReference>
<dbReference type="NCBIfam" id="NF009920">
    <property type="entry name" value="PRK13381.1"/>
    <property type="match status" value="1"/>
</dbReference>
<dbReference type="PANTHER" id="PTHR42994">
    <property type="entry name" value="PEPTIDASE T"/>
    <property type="match status" value="1"/>
</dbReference>
<dbReference type="PANTHER" id="PTHR42994:SF1">
    <property type="entry name" value="PEPTIDASE T"/>
    <property type="match status" value="1"/>
</dbReference>
<dbReference type="Pfam" id="PF07687">
    <property type="entry name" value="M20_dimer"/>
    <property type="match status" value="1"/>
</dbReference>
<dbReference type="Pfam" id="PF01546">
    <property type="entry name" value="Peptidase_M20"/>
    <property type="match status" value="1"/>
</dbReference>
<dbReference type="PIRSF" id="PIRSF037215">
    <property type="entry name" value="Peptidase_M20B"/>
    <property type="match status" value="1"/>
</dbReference>
<dbReference type="SUPFAM" id="SSF55031">
    <property type="entry name" value="Bacterial exopeptidase dimerisation domain"/>
    <property type="match status" value="1"/>
</dbReference>
<dbReference type="SUPFAM" id="SSF53187">
    <property type="entry name" value="Zn-dependent exopeptidases"/>
    <property type="match status" value="1"/>
</dbReference>
<dbReference type="PROSITE" id="PS00758">
    <property type="entry name" value="ARGE_DAPE_CPG2_1"/>
    <property type="match status" value="1"/>
</dbReference>
<dbReference type="PROSITE" id="PS00759">
    <property type="entry name" value="ARGE_DAPE_CPG2_2"/>
    <property type="match status" value="1"/>
</dbReference>
<proteinExistence type="inferred from homology"/>
<comment type="function">
    <text evidence="1">Cleaves the N-terminal amino acid of tripeptides.</text>
</comment>
<comment type="catalytic activity">
    <reaction evidence="1">
        <text>Release of the N-terminal residue from a tripeptide.</text>
        <dbReference type="EC" id="3.4.11.4"/>
    </reaction>
</comment>
<comment type="cofactor">
    <cofactor evidence="1">
        <name>Zn(2+)</name>
        <dbReference type="ChEBI" id="CHEBI:29105"/>
    </cofactor>
    <text evidence="1">Binds 2 Zn(2+) ions per subunit.</text>
</comment>
<comment type="subcellular location">
    <subcellularLocation>
        <location evidence="1">Cytoplasm</location>
    </subcellularLocation>
</comment>
<comment type="similarity">
    <text evidence="1">Belongs to the peptidase M20B family.</text>
</comment>
<protein>
    <recommendedName>
        <fullName evidence="1">Peptidase T</fullName>
        <ecNumber evidence="1">3.4.11.4</ecNumber>
    </recommendedName>
    <alternativeName>
        <fullName evidence="1">Aminotripeptidase</fullName>
        <shortName evidence="1">Tripeptidase</shortName>
    </alternativeName>
    <alternativeName>
        <fullName evidence="1">Tripeptide aminopeptidase</fullName>
    </alternativeName>
</protein>
<organism>
    <name type="scientific">Staphylococcus aureus (strain NCTC 8325 / PS 47)</name>
    <dbReference type="NCBI Taxonomy" id="93061"/>
    <lineage>
        <taxon>Bacteria</taxon>
        <taxon>Bacillati</taxon>
        <taxon>Bacillota</taxon>
        <taxon>Bacilli</taxon>
        <taxon>Bacillales</taxon>
        <taxon>Staphylococcaceae</taxon>
        <taxon>Staphylococcus</taxon>
    </lineage>
</organism>
<accession>Q2G064</accession>
<feature type="chain" id="PRO_0000274022" description="Peptidase T">
    <location>
        <begin position="1"/>
        <end position="408"/>
    </location>
</feature>
<feature type="region of interest" description="Disordered" evidence="2">
    <location>
        <begin position="1"/>
        <end position="28"/>
    </location>
</feature>
<feature type="compositionally biased region" description="Polar residues" evidence="2">
    <location>
        <begin position="11"/>
        <end position="28"/>
    </location>
</feature>
<feature type="active site" evidence="1">
    <location>
        <position position="80"/>
    </location>
</feature>
<feature type="active site" description="Proton acceptor" evidence="1">
    <location>
        <position position="174"/>
    </location>
</feature>
<feature type="binding site" evidence="1">
    <location>
        <position position="78"/>
    </location>
    <ligand>
        <name>Zn(2+)</name>
        <dbReference type="ChEBI" id="CHEBI:29105"/>
        <label>1</label>
    </ligand>
</feature>
<feature type="binding site" evidence="1">
    <location>
        <position position="140"/>
    </location>
    <ligand>
        <name>Zn(2+)</name>
        <dbReference type="ChEBI" id="CHEBI:29105"/>
        <label>1</label>
    </ligand>
</feature>
<feature type="binding site" evidence="1">
    <location>
        <position position="140"/>
    </location>
    <ligand>
        <name>Zn(2+)</name>
        <dbReference type="ChEBI" id="CHEBI:29105"/>
        <label>2</label>
    </ligand>
</feature>
<feature type="binding site" evidence="1">
    <location>
        <position position="175"/>
    </location>
    <ligand>
        <name>Zn(2+)</name>
        <dbReference type="ChEBI" id="CHEBI:29105"/>
        <label>2</label>
    </ligand>
</feature>
<feature type="binding site" evidence="1">
    <location>
        <position position="197"/>
    </location>
    <ligand>
        <name>Zn(2+)</name>
        <dbReference type="ChEBI" id="CHEBI:29105"/>
        <label>1</label>
    </ligand>
</feature>
<feature type="binding site" evidence="1">
    <location>
        <position position="379"/>
    </location>
    <ligand>
        <name>Zn(2+)</name>
        <dbReference type="ChEBI" id="CHEBI:29105"/>
        <label>2</label>
    </ligand>
</feature>
<reference key="1">
    <citation type="book" date="2006" name="Gram positive pathogens, 2nd edition">
        <title>The Staphylococcus aureus NCTC 8325 genome.</title>
        <editorList>
            <person name="Fischetti V."/>
            <person name="Novick R."/>
            <person name="Ferretti J."/>
            <person name="Portnoy D."/>
            <person name="Rood J."/>
        </editorList>
        <authorList>
            <person name="Gillaspy A.F."/>
            <person name="Worrell V."/>
            <person name="Orvis J."/>
            <person name="Roe B.A."/>
            <person name="Dyer D.W."/>
            <person name="Iandolo J.J."/>
        </authorList>
    </citation>
    <scope>NUCLEOTIDE SEQUENCE [LARGE SCALE GENOMIC DNA]</scope>
    <source>
        <strain>NCTC 8325 / PS 47</strain>
    </source>
</reference>
<sequence length="408" mass="45848">MKNQLIDRLTRYTTIDTQSDPKSTTTPSTEKQWDLLHLLEKELQQLGLPTDLDENGYLFATLESNIDVDVPTVGFLAHVDTSPDFNASNVKPQIIENYDGKPYKLGNTKRVLDPKVFPELNSLVGHTLMVTDGTSLLGADDKAGIVEIMEAICYLQEHPEIKHGTIRIGFTPDEEIGRGPHKFDVDRFNADFAYTMDGSQYGELQYESFNAAEAVITCHGVNVHPGSAKNAMVNAIRLGEQFDSLLPDSEVPERTEGYEGFYHLMNFEGTVEKATLQYIIRDHDKKQFELRKKRILEIRDDINAHFENYPVKVDISDQYFNMAEKILPLPHIIDIPKRVFAKLDIPANTEPIRGGTDGSQLSFMGLPTPNIFTGCGNFHGPYEYASIDVMEKAVQVIIGIVEDIAENH</sequence>